<protein>
    <recommendedName>
        <fullName evidence="1">Recombination protein RecR</fullName>
    </recommendedName>
</protein>
<organism>
    <name type="scientific">Staphylococcus aureus (strain MSSA476)</name>
    <dbReference type="NCBI Taxonomy" id="282459"/>
    <lineage>
        <taxon>Bacteria</taxon>
        <taxon>Bacillati</taxon>
        <taxon>Bacillota</taxon>
        <taxon>Bacilli</taxon>
        <taxon>Bacillales</taxon>
        <taxon>Staphylococcaceae</taxon>
        <taxon>Staphylococcus</taxon>
    </lineage>
</organism>
<reference key="1">
    <citation type="journal article" date="2004" name="Proc. Natl. Acad. Sci. U.S.A.">
        <title>Complete genomes of two clinical Staphylococcus aureus strains: evidence for the rapid evolution of virulence and drug resistance.</title>
        <authorList>
            <person name="Holden M.T.G."/>
            <person name="Feil E.J."/>
            <person name="Lindsay J.A."/>
            <person name="Peacock S.J."/>
            <person name="Day N.P.J."/>
            <person name="Enright M.C."/>
            <person name="Foster T.J."/>
            <person name="Moore C.E."/>
            <person name="Hurst L."/>
            <person name="Atkin R."/>
            <person name="Barron A."/>
            <person name="Bason N."/>
            <person name="Bentley S.D."/>
            <person name="Chillingworth C."/>
            <person name="Chillingworth T."/>
            <person name="Churcher C."/>
            <person name="Clark L."/>
            <person name="Corton C."/>
            <person name="Cronin A."/>
            <person name="Doggett J."/>
            <person name="Dowd L."/>
            <person name="Feltwell T."/>
            <person name="Hance Z."/>
            <person name="Harris B."/>
            <person name="Hauser H."/>
            <person name="Holroyd S."/>
            <person name="Jagels K."/>
            <person name="James K.D."/>
            <person name="Lennard N."/>
            <person name="Line A."/>
            <person name="Mayes R."/>
            <person name="Moule S."/>
            <person name="Mungall K."/>
            <person name="Ormond D."/>
            <person name="Quail M.A."/>
            <person name="Rabbinowitsch E."/>
            <person name="Rutherford K.M."/>
            <person name="Sanders M."/>
            <person name="Sharp S."/>
            <person name="Simmonds M."/>
            <person name="Stevens K."/>
            <person name="Whitehead S."/>
            <person name="Barrell B.G."/>
            <person name="Spratt B.G."/>
            <person name="Parkhill J."/>
        </authorList>
    </citation>
    <scope>NUCLEOTIDE SEQUENCE [LARGE SCALE GENOMIC DNA]</scope>
    <source>
        <strain>MSSA476</strain>
    </source>
</reference>
<keyword id="KW-0227">DNA damage</keyword>
<keyword id="KW-0233">DNA recombination</keyword>
<keyword id="KW-0234">DNA repair</keyword>
<keyword id="KW-0479">Metal-binding</keyword>
<keyword id="KW-0862">Zinc</keyword>
<keyword id="KW-0863">Zinc-finger</keyword>
<accession>Q6GC08</accession>
<comment type="function">
    <text evidence="1">May play a role in DNA repair. It seems to be involved in an RecBC-independent recombinational process of DNA repair. It may act with RecF and RecO.</text>
</comment>
<comment type="similarity">
    <text evidence="1">Belongs to the RecR family.</text>
</comment>
<gene>
    <name evidence="1" type="primary">recR</name>
    <name type="ordered locus">SAS0437</name>
</gene>
<sequence length="198" mass="22100">MHYPEPISKLIDSFMKLPGIGPKTAQRLAFHTLDMKEDDVVQFAKALVDVKRELTYCSVCGHITENDPCYICEDKQRDRSVICVVEDDKDVIAMEKMREYKGLYHVLHGSISPMDGIGPEDINIPSLIERLKNDEVSELILAMNPNLEGESTAMYISRLVKPIGIKVTRLAQGLSVGGDLEYADEVTLSKAIAGRTEM</sequence>
<evidence type="ECO:0000255" key="1">
    <source>
        <dbReference type="HAMAP-Rule" id="MF_00017"/>
    </source>
</evidence>
<name>RECR_STAAS</name>
<feature type="chain" id="PRO_0000190389" description="Recombination protein RecR">
    <location>
        <begin position="1"/>
        <end position="198"/>
    </location>
</feature>
<feature type="domain" description="Toprim" evidence="1">
    <location>
        <begin position="80"/>
        <end position="175"/>
    </location>
</feature>
<feature type="zinc finger region" description="C4-type" evidence="1">
    <location>
        <begin position="57"/>
        <end position="72"/>
    </location>
</feature>
<proteinExistence type="inferred from homology"/>
<dbReference type="EMBL" id="BX571857">
    <property type="protein sequence ID" value="CAG42212.1"/>
    <property type="molecule type" value="Genomic_DNA"/>
</dbReference>
<dbReference type="RefSeq" id="WP_000559156.1">
    <property type="nucleotide sequence ID" value="NC_002953.3"/>
</dbReference>
<dbReference type="SMR" id="Q6GC08"/>
<dbReference type="KEGG" id="sas:SAS0437"/>
<dbReference type="HOGENOM" id="CLU_060739_1_0_9"/>
<dbReference type="GO" id="GO:0003677">
    <property type="term" value="F:DNA binding"/>
    <property type="evidence" value="ECO:0007669"/>
    <property type="project" value="UniProtKB-UniRule"/>
</dbReference>
<dbReference type="GO" id="GO:0008270">
    <property type="term" value="F:zinc ion binding"/>
    <property type="evidence" value="ECO:0007669"/>
    <property type="project" value="UniProtKB-KW"/>
</dbReference>
<dbReference type="GO" id="GO:0006310">
    <property type="term" value="P:DNA recombination"/>
    <property type="evidence" value="ECO:0007669"/>
    <property type="project" value="UniProtKB-UniRule"/>
</dbReference>
<dbReference type="GO" id="GO:0006281">
    <property type="term" value="P:DNA repair"/>
    <property type="evidence" value="ECO:0007669"/>
    <property type="project" value="UniProtKB-UniRule"/>
</dbReference>
<dbReference type="CDD" id="cd01025">
    <property type="entry name" value="TOPRIM_recR"/>
    <property type="match status" value="1"/>
</dbReference>
<dbReference type="Gene3D" id="3.30.60.80">
    <property type="match status" value="1"/>
</dbReference>
<dbReference type="Gene3D" id="3.40.1360.10">
    <property type="match status" value="1"/>
</dbReference>
<dbReference type="Gene3D" id="6.10.250.240">
    <property type="match status" value="1"/>
</dbReference>
<dbReference type="Gene3D" id="1.10.8.420">
    <property type="entry name" value="RecR Domain 1"/>
    <property type="match status" value="1"/>
</dbReference>
<dbReference type="HAMAP" id="MF_00017">
    <property type="entry name" value="RecR"/>
    <property type="match status" value="1"/>
</dbReference>
<dbReference type="InterPro" id="IPR000093">
    <property type="entry name" value="DNA_Rcmb_RecR"/>
</dbReference>
<dbReference type="InterPro" id="IPR003583">
    <property type="entry name" value="Hlx-hairpin-Hlx_DNA-bd_motif"/>
</dbReference>
<dbReference type="InterPro" id="IPR023627">
    <property type="entry name" value="Rcmb_RecR"/>
</dbReference>
<dbReference type="InterPro" id="IPR015967">
    <property type="entry name" value="Rcmb_RecR_Znf"/>
</dbReference>
<dbReference type="InterPro" id="IPR006171">
    <property type="entry name" value="TOPRIM_dom"/>
</dbReference>
<dbReference type="InterPro" id="IPR034137">
    <property type="entry name" value="TOPRIM_RecR"/>
</dbReference>
<dbReference type="NCBIfam" id="TIGR00615">
    <property type="entry name" value="recR"/>
    <property type="match status" value="1"/>
</dbReference>
<dbReference type="PANTHER" id="PTHR30446">
    <property type="entry name" value="RECOMBINATION PROTEIN RECR"/>
    <property type="match status" value="1"/>
</dbReference>
<dbReference type="PANTHER" id="PTHR30446:SF0">
    <property type="entry name" value="RECOMBINATION PROTEIN RECR"/>
    <property type="match status" value="1"/>
</dbReference>
<dbReference type="Pfam" id="PF21175">
    <property type="entry name" value="RecR_C"/>
    <property type="match status" value="1"/>
</dbReference>
<dbReference type="Pfam" id="PF21176">
    <property type="entry name" value="RecR_HhH"/>
    <property type="match status" value="1"/>
</dbReference>
<dbReference type="Pfam" id="PF02132">
    <property type="entry name" value="RecR_ZnF"/>
    <property type="match status" value="1"/>
</dbReference>
<dbReference type="Pfam" id="PF13662">
    <property type="entry name" value="Toprim_4"/>
    <property type="match status" value="1"/>
</dbReference>
<dbReference type="SMART" id="SM00278">
    <property type="entry name" value="HhH1"/>
    <property type="match status" value="1"/>
</dbReference>
<dbReference type="SMART" id="SM00493">
    <property type="entry name" value="TOPRIM"/>
    <property type="match status" value="1"/>
</dbReference>
<dbReference type="SUPFAM" id="SSF111304">
    <property type="entry name" value="Recombination protein RecR"/>
    <property type="match status" value="1"/>
</dbReference>
<dbReference type="PROSITE" id="PS01300">
    <property type="entry name" value="RECR"/>
    <property type="match status" value="1"/>
</dbReference>
<dbReference type="PROSITE" id="PS50880">
    <property type="entry name" value="TOPRIM"/>
    <property type="match status" value="1"/>
</dbReference>